<sequence>MIKNKILTATLAVGLIAPLANPFIEISKAENKIEDIGQGAEIIKRTQDITSKRLAITQNIQFDFVKDKKYNKDALVVKMQGFISSRTTYSDLKKYPYIKRMIWPFQYNISLKTKDSNVDLINYLPKNKIDSADVSQKLGYNIGGNFQSAPSIGGSGSFNYSKTISYNQKNYVTEVESQNSKGVKWGVKANSFVTPNGQVSAYDQYLFAQDPTGPAARDYFVPDNQLPPLIQSGFNPSFITTLSHERGKGDKSEFEITYGRNMDATYAYVTRHRLAVDRKHDAFKNRNVTVKYEVNWKTHEVKIKSITPK</sequence>
<feature type="signal peptide" evidence="1">
    <location>
        <begin position="1"/>
        <end position="29"/>
    </location>
</feature>
<feature type="chain" id="PRO_0000045214" description="Gamma-hemolysin component A">
    <location>
        <begin position="30"/>
        <end position="309"/>
    </location>
</feature>
<evidence type="ECO:0000250" key="1"/>
<evidence type="ECO:0000305" key="2"/>
<dbReference type="EMBL" id="CP000046">
    <property type="protein sequence ID" value="AAW37243.1"/>
    <property type="molecule type" value="Genomic_DNA"/>
</dbReference>
<dbReference type="RefSeq" id="WP_000594519.1">
    <property type="nucleotide sequence ID" value="NZ_JBGOFO010000004.1"/>
</dbReference>
<dbReference type="SMR" id="Q5HDD6"/>
<dbReference type="KEGG" id="sac:SACOL2419"/>
<dbReference type="HOGENOM" id="CLU_075311_0_0_9"/>
<dbReference type="Proteomes" id="UP000000530">
    <property type="component" value="Chromosome"/>
</dbReference>
<dbReference type="GO" id="GO:0005576">
    <property type="term" value="C:extracellular region"/>
    <property type="evidence" value="ECO:0007669"/>
    <property type="project" value="UniProtKB-SubCell"/>
</dbReference>
<dbReference type="GO" id="GO:0090729">
    <property type="term" value="F:toxin activity"/>
    <property type="evidence" value="ECO:0007669"/>
    <property type="project" value="UniProtKB-KW"/>
</dbReference>
<dbReference type="GO" id="GO:0051715">
    <property type="term" value="P:cytolysis in another organism"/>
    <property type="evidence" value="ECO:0007669"/>
    <property type="project" value="InterPro"/>
</dbReference>
<dbReference type="Gene3D" id="2.70.240.10">
    <property type="entry name" value="Leukocidin/porin MspA"/>
    <property type="match status" value="1"/>
</dbReference>
<dbReference type="InterPro" id="IPR003963">
    <property type="entry name" value="Bi-component_toxin_staph"/>
</dbReference>
<dbReference type="InterPro" id="IPR016183">
    <property type="entry name" value="Leukocidin/Hemolysin_toxin"/>
</dbReference>
<dbReference type="InterPro" id="IPR036435">
    <property type="entry name" value="Leukocidin/porin_MspA_sf"/>
</dbReference>
<dbReference type="NCBIfam" id="TIGR01002">
    <property type="entry name" value="hlyII"/>
    <property type="match status" value="1"/>
</dbReference>
<dbReference type="Pfam" id="PF07968">
    <property type="entry name" value="Leukocidin"/>
    <property type="match status" value="1"/>
</dbReference>
<dbReference type="PRINTS" id="PR01468">
    <property type="entry name" value="BICOMPNTOXIN"/>
</dbReference>
<dbReference type="SUPFAM" id="SSF56959">
    <property type="entry name" value="Leukocidin-like"/>
    <property type="match status" value="1"/>
</dbReference>
<organism>
    <name type="scientific">Staphylococcus aureus (strain COL)</name>
    <dbReference type="NCBI Taxonomy" id="93062"/>
    <lineage>
        <taxon>Bacteria</taxon>
        <taxon>Bacillati</taxon>
        <taxon>Bacillota</taxon>
        <taxon>Bacilli</taxon>
        <taxon>Bacillales</taxon>
        <taxon>Staphylococcaceae</taxon>
        <taxon>Staphylococcus</taxon>
    </lineage>
</organism>
<proteinExistence type="inferred from homology"/>
<accession>Q5HDD6</accession>
<protein>
    <recommendedName>
        <fullName>Gamma-hemolysin component A</fullName>
    </recommendedName>
    <alternativeName>
        <fullName>H-gamma-2</fullName>
    </alternativeName>
    <alternativeName>
        <fullName>H-gamma-II</fullName>
    </alternativeName>
</protein>
<comment type="function">
    <text evidence="1">Toxin that seems to act by forming pores in the membrane of the cell. Has a hemolytic and a leucotoxic activity (By similarity).</text>
</comment>
<comment type="subunit">
    <text evidence="1">Toxicity requires sequential binding and synergistic association of a class S and a class F component which form heterooligomeric complexes. HlgA (class S) associates with HlgB (class F) thus forming an AB toxin in strains producing both gamma-hemolysins and leukocidins. HlgA and LukF-PV can also form a complex (By similarity).</text>
</comment>
<comment type="subcellular location">
    <subcellularLocation>
        <location evidence="1">Secreted</location>
    </subcellularLocation>
</comment>
<comment type="similarity">
    <text evidence="2">Belongs to the aerolysin family.</text>
</comment>
<reference key="1">
    <citation type="journal article" date="2005" name="J. Bacteriol.">
        <title>Insights on evolution of virulence and resistance from the complete genome analysis of an early methicillin-resistant Staphylococcus aureus strain and a biofilm-producing methicillin-resistant Staphylococcus epidermidis strain.</title>
        <authorList>
            <person name="Gill S.R."/>
            <person name="Fouts D.E."/>
            <person name="Archer G.L."/>
            <person name="Mongodin E.F."/>
            <person name="DeBoy R.T."/>
            <person name="Ravel J."/>
            <person name="Paulsen I.T."/>
            <person name="Kolonay J.F."/>
            <person name="Brinkac L.M."/>
            <person name="Beanan M.J."/>
            <person name="Dodson R.J."/>
            <person name="Daugherty S.C."/>
            <person name="Madupu R."/>
            <person name="Angiuoli S.V."/>
            <person name="Durkin A.S."/>
            <person name="Haft D.H."/>
            <person name="Vamathevan J.J."/>
            <person name="Khouri H."/>
            <person name="Utterback T.R."/>
            <person name="Lee C."/>
            <person name="Dimitrov G."/>
            <person name="Jiang L."/>
            <person name="Qin H."/>
            <person name="Weidman J."/>
            <person name="Tran K."/>
            <person name="Kang K.H."/>
            <person name="Hance I.R."/>
            <person name="Nelson K.E."/>
            <person name="Fraser C.M."/>
        </authorList>
    </citation>
    <scope>NUCLEOTIDE SEQUENCE [LARGE SCALE GENOMIC DNA]</scope>
    <source>
        <strain>COL</strain>
    </source>
</reference>
<gene>
    <name type="primary">hlgA</name>
    <name type="ordered locus">SACOL2419</name>
</gene>
<name>HLGA_STAAC</name>
<keyword id="KW-0204">Cytolysis</keyword>
<keyword id="KW-0354">Hemolysis</keyword>
<keyword id="KW-0964">Secreted</keyword>
<keyword id="KW-0732">Signal</keyword>
<keyword id="KW-0800">Toxin</keyword>
<keyword id="KW-0843">Virulence</keyword>